<accession>O80683</accession>
<comment type="function">
    <text evidence="2">Calmodulin-binding protein that functions as a negative regulator of osmotic stress tolerance.</text>
</comment>
<comment type="subunit">
    <text evidence="2 3">Interacts with calmodulin (CaM) (PubMed:15086802). Interacts with WRKY25 and WRKY51 (PubMed:22535423).</text>
</comment>
<comment type="subcellular location">
    <subcellularLocation>
        <location evidence="2">Nucleus</location>
    </subcellularLocation>
</comment>
<comment type="tissue specificity">
    <text evidence="2">Expressed in leaves, flowers and siliques.</text>
</comment>
<comment type="induction">
    <text evidence="2">By cold, salt stress and dehydration.</text>
</comment>
<sequence length="238" mass="25377">MVTSEGLASVDSWLYRQGFNVDSWLLSDTFSHDNDLLARALHTTVTAPHTLTPSSAFFDSSAVSHPSSTNTLSSTVSGASDPEIIGGGAKRKRNCLLTDGKAAKRRARASKKSQTTFITADPSNFRQMVQQVTGAKYIDDSSSFGIFDPIVKPEPLRFVNKLPCGPSDRSTAVPMLDTSAFLSNHHQENLAVGNAFSGNSSSVGLPSGKPSATADPGGSAVEFDNYPTFPTLESWKVM</sequence>
<organism>
    <name type="scientific">Arabidopsis thaliana</name>
    <name type="common">Mouse-ear cress</name>
    <dbReference type="NCBI Taxonomy" id="3702"/>
    <lineage>
        <taxon>Eukaryota</taxon>
        <taxon>Viridiplantae</taxon>
        <taxon>Streptophyta</taxon>
        <taxon>Embryophyta</taxon>
        <taxon>Tracheophyta</taxon>
        <taxon>Spermatophyta</taxon>
        <taxon>Magnoliopsida</taxon>
        <taxon>eudicotyledons</taxon>
        <taxon>Gunneridae</taxon>
        <taxon>Pentapetalae</taxon>
        <taxon>rosids</taxon>
        <taxon>malvids</taxon>
        <taxon>Brassicales</taxon>
        <taxon>Brassicaceae</taxon>
        <taxon>Camelineae</taxon>
        <taxon>Arabidopsis</taxon>
    </lineage>
</organism>
<protein>
    <recommendedName>
        <fullName evidence="4">Calmodulin-binding protein 25</fullName>
        <shortName evidence="4">AtCAMBP25</shortName>
    </recommendedName>
    <alternativeName>
        <fullName evidence="5">VQ motif-containing protein 15</fullName>
        <shortName evidence="5">AtVQ15</shortName>
    </alternativeName>
</protein>
<proteinExistence type="evidence at protein level"/>
<name>CAB25_ARATH</name>
<reference key="1">
    <citation type="journal article" date="2004" name="Plant J.">
        <title>A novel calmodulin-binding protein functions as a negative regulator of osmotic stress tolerance in Arabidopsis thaliana seedlings.</title>
        <authorList>
            <person name="Perruc E."/>
            <person name="Charpenteau M."/>
            <person name="Ramirez B.C."/>
            <person name="Jauneau A."/>
            <person name="Galaud J.P."/>
            <person name="Ranjeva R."/>
            <person name="Ranty B."/>
        </authorList>
    </citation>
    <scope>NUCLEOTIDE SEQUENCE [MRNA]</scope>
    <scope>FUNCTION</scope>
    <scope>INTERACTION WITH CALMODULIN</scope>
    <scope>SUBCELLULAR LOCATION</scope>
    <scope>TISSUE SPECIFICITY</scope>
    <scope>INDUCTION</scope>
</reference>
<reference key="2">
    <citation type="journal article" date="1999" name="Nature">
        <title>Sequence and analysis of chromosome 2 of the plant Arabidopsis thaliana.</title>
        <authorList>
            <person name="Lin X."/>
            <person name="Kaul S."/>
            <person name="Rounsley S.D."/>
            <person name="Shea T.P."/>
            <person name="Benito M.-I."/>
            <person name="Town C.D."/>
            <person name="Fujii C.Y."/>
            <person name="Mason T.M."/>
            <person name="Bowman C.L."/>
            <person name="Barnstead M.E."/>
            <person name="Feldblyum T.V."/>
            <person name="Buell C.R."/>
            <person name="Ketchum K.A."/>
            <person name="Lee J.J."/>
            <person name="Ronning C.M."/>
            <person name="Koo H.L."/>
            <person name="Moffat K.S."/>
            <person name="Cronin L.A."/>
            <person name="Shen M."/>
            <person name="Pai G."/>
            <person name="Van Aken S."/>
            <person name="Umayam L."/>
            <person name="Tallon L.J."/>
            <person name="Gill J.E."/>
            <person name="Adams M.D."/>
            <person name="Carrera A.J."/>
            <person name="Creasy T.H."/>
            <person name="Goodman H.M."/>
            <person name="Somerville C.R."/>
            <person name="Copenhaver G.P."/>
            <person name="Preuss D."/>
            <person name="Nierman W.C."/>
            <person name="White O."/>
            <person name="Eisen J.A."/>
            <person name="Salzberg S.L."/>
            <person name="Fraser C.M."/>
            <person name="Venter J.C."/>
        </authorList>
    </citation>
    <scope>NUCLEOTIDE SEQUENCE [LARGE SCALE GENOMIC DNA]</scope>
    <source>
        <strain>cv. Columbia</strain>
    </source>
</reference>
<reference key="3">
    <citation type="journal article" date="2017" name="Plant J.">
        <title>Araport11: a complete reannotation of the Arabidopsis thaliana reference genome.</title>
        <authorList>
            <person name="Cheng C.Y."/>
            <person name="Krishnakumar V."/>
            <person name="Chan A.P."/>
            <person name="Thibaud-Nissen F."/>
            <person name="Schobel S."/>
            <person name="Town C.D."/>
        </authorList>
    </citation>
    <scope>GENOME REANNOTATION</scope>
    <source>
        <strain>cv. Columbia</strain>
    </source>
</reference>
<reference key="4">
    <citation type="journal article" date="2002" name="Science">
        <title>Functional annotation of a full-length Arabidopsis cDNA collection.</title>
        <authorList>
            <person name="Seki M."/>
            <person name="Narusaka M."/>
            <person name="Kamiya A."/>
            <person name="Ishida J."/>
            <person name="Satou M."/>
            <person name="Sakurai T."/>
            <person name="Nakajima M."/>
            <person name="Enju A."/>
            <person name="Akiyama K."/>
            <person name="Oono Y."/>
            <person name="Muramatsu M."/>
            <person name="Hayashizaki Y."/>
            <person name="Kawai J."/>
            <person name="Carninci P."/>
            <person name="Itoh M."/>
            <person name="Ishii Y."/>
            <person name="Arakawa T."/>
            <person name="Shibata K."/>
            <person name="Shinagawa A."/>
            <person name="Shinozaki K."/>
        </authorList>
    </citation>
    <scope>NUCLEOTIDE SEQUENCE [LARGE SCALE MRNA]</scope>
    <source>
        <strain>cv. Columbia</strain>
    </source>
</reference>
<reference key="5">
    <citation type="journal article" date="2003" name="Science">
        <title>Empirical analysis of transcriptional activity in the Arabidopsis genome.</title>
        <authorList>
            <person name="Yamada K."/>
            <person name="Lim J."/>
            <person name="Dale J.M."/>
            <person name="Chen H."/>
            <person name="Shinn P."/>
            <person name="Palm C.J."/>
            <person name="Southwick A.M."/>
            <person name="Wu H.C."/>
            <person name="Kim C.J."/>
            <person name="Nguyen M."/>
            <person name="Pham P.K."/>
            <person name="Cheuk R.F."/>
            <person name="Karlin-Newmann G."/>
            <person name="Liu S.X."/>
            <person name="Lam B."/>
            <person name="Sakano H."/>
            <person name="Wu T."/>
            <person name="Yu G."/>
            <person name="Miranda M."/>
            <person name="Quach H.L."/>
            <person name="Tripp M."/>
            <person name="Chang C.H."/>
            <person name="Lee J.M."/>
            <person name="Toriumi M.J."/>
            <person name="Chan M.M."/>
            <person name="Tang C.C."/>
            <person name="Onodera C.S."/>
            <person name="Deng J.M."/>
            <person name="Akiyama K."/>
            <person name="Ansari Y."/>
            <person name="Arakawa T."/>
            <person name="Banh J."/>
            <person name="Banno F."/>
            <person name="Bowser L."/>
            <person name="Brooks S.Y."/>
            <person name="Carninci P."/>
            <person name="Chao Q."/>
            <person name="Choy N."/>
            <person name="Enju A."/>
            <person name="Goldsmith A.D."/>
            <person name="Gurjal M."/>
            <person name="Hansen N.F."/>
            <person name="Hayashizaki Y."/>
            <person name="Johnson-Hopson C."/>
            <person name="Hsuan V.W."/>
            <person name="Iida K."/>
            <person name="Karnes M."/>
            <person name="Khan S."/>
            <person name="Koesema E."/>
            <person name="Ishida J."/>
            <person name="Jiang P.X."/>
            <person name="Jones T."/>
            <person name="Kawai J."/>
            <person name="Kamiya A."/>
            <person name="Meyers C."/>
            <person name="Nakajima M."/>
            <person name="Narusaka M."/>
            <person name="Seki M."/>
            <person name="Sakurai T."/>
            <person name="Satou M."/>
            <person name="Tamse R."/>
            <person name="Vaysberg M."/>
            <person name="Wallender E.K."/>
            <person name="Wong C."/>
            <person name="Yamamura Y."/>
            <person name="Yuan S."/>
            <person name="Shinozaki K."/>
            <person name="Davis R.W."/>
            <person name="Theologis A."/>
            <person name="Ecker J.R."/>
        </authorList>
    </citation>
    <scope>NUCLEOTIDE SEQUENCE [LARGE SCALE MRNA]</scope>
    <source>
        <strain>cv. Columbia</strain>
    </source>
</reference>
<reference key="6">
    <citation type="submission" date="2006-02" db="EMBL/GenBank/DDBJ databases">
        <title>Arabidopsis ORF clones.</title>
        <authorList>
            <person name="Shinn P."/>
            <person name="Chen H."/>
            <person name="Kim C.J."/>
            <person name="Ecker J.R."/>
        </authorList>
    </citation>
    <scope>NUCLEOTIDE SEQUENCE [LARGE SCALE GENOMIC DNA]</scope>
    <source>
        <strain>cv. Columbia</strain>
    </source>
</reference>
<reference key="7">
    <citation type="journal article" date="2012" name="Plant Physiol.">
        <title>Structural and functional analysis of VQ motif-containing proteins in Arabidopsis as interacting proteins of WRKY transcription factors.</title>
        <authorList>
            <person name="Cheng Y."/>
            <person name="Zhou Y."/>
            <person name="Yang Y."/>
            <person name="Chi Y.J."/>
            <person name="Zhou J."/>
            <person name="Chen J.Y."/>
            <person name="Wang F."/>
            <person name="Fan B."/>
            <person name="Shi K."/>
            <person name="Zhou Y.H."/>
            <person name="Yu J.Q."/>
            <person name="Chen Z."/>
        </authorList>
    </citation>
    <scope>INTERACTION WITH WRKY25 AND WRKY51</scope>
    <scope>GENE FAMILY</scope>
    <scope>NOMENCLATURE</scope>
</reference>
<keyword id="KW-0112">Calmodulin-binding</keyword>
<keyword id="KW-0539">Nucleus</keyword>
<keyword id="KW-1185">Reference proteome</keyword>
<keyword id="KW-0346">Stress response</keyword>
<gene>
    <name evidence="4" type="primary">CAMBP25</name>
    <name evidence="5" type="synonym">VQ15</name>
    <name evidence="8" type="ordered locus">At2g41010</name>
</gene>
<evidence type="ECO:0000256" key="1">
    <source>
        <dbReference type="SAM" id="MobiDB-lite"/>
    </source>
</evidence>
<evidence type="ECO:0000269" key="2">
    <source>
    </source>
</evidence>
<evidence type="ECO:0000269" key="3">
    <source>
    </source>
</evidence>
<evidence type="ECO:0000303" key="4">
    <source>
    </source>
</evidence>
<evidence type="ECO:0000303" key="5">
    <source>
    </source>
</evidence>
<evidence type="ECO:0000305" key="6"/>
<evidence type="ECO:0000305" key="7">
    <source>
    </source>
</evidence>
<evidence type="ECO:0000312" key="8">
    <source>
        <dbReference type="Araport" id="AT2G41010"/>
    </source>
</evidence>
<dbReference type="EMBL" id="AY531115">
    <property type="protein sequence ID" value="AAS20952.1"/>
    <property type="molecule type" value="mRNA"/>
</dbReference>
<dbReference type="EMBL" id="AC004261">
    <property type="protein sequence ID" value="AAD12010.1"/>
    <property type="molecule type" value="Genomic_DNA"/>
</dbReference>
<dbReference type="EMBL" id="CP002685">
    <property type="protein sequence ID" value="AEC09915.1"/>
    <property type="molecule type" value="Genomic_DNA"/>
</dbReference>
<dbReference type="EMBL" id="AK117111">
    <property type="protein sequence ID" value="BAC41790.1"/>
    <property type="molecule type" value="mRNA"/>
</dbReference>
<dbReference type="EMBL" id="AF325087">
    <property type="protein sequence ID" value="AAK17155.1"/>
    <property type="molecule type" value="mRNA"/>
</dbReference>
<dbReference type="EMBL" id="BT024619">
    <property type="protein sequence ID" value="ABD43017.1"/>
    <property type="molecule type" value="mRNA"/>
</dbReference>
<dbReference type="PIR" id="T02118">
    <property type="entry name" value="T02118"/>
</dbReference>
<dbReference type="RefSeq" id="NP_181634.1">
    <property type="nucleotide sequence ID" value="NM_129666.5"/>
</dbReference>
<dbReference type="FunCoup" id="O80683">
    <property type="interactions" value="340"/>
</dbReference>
<dbReference type="STRING" id="3702.O80683"/>
<dbReference type="GlyGen" id="O80683">
    <property type="glycosylation" value="2 sites, 1 O-linked glycan (2 sites)"/>
</dbReference>
<dbReference type="PaxDb" id="3702-AT2G41010.1"/>
<dbReference type="ProteomicsDB" id="223858"/>
<dbReference type="EnsemblPlants" id="AT2G41010.1">
    <property type="protein sequence ID" value="AT2G41010.1"/>
    <property type="gene ID" value="AT2G41010"/>
</dbReference>
<dbReference type="GeneID" id="818701"/>
<dbReference type="Gramene" id="AT2G41010.1">
    <property type="protein sequence ID" value="AT2G41010.1"/>
    <property type="gene ID" value="AT2G41010"/>
</dbReference>
<dbReference type="KEGG" id="ath:AT2G41010"/>
<dbReference type="Araport" id="AT2G41010"/>
<dbReference type="TAIR" id="AT2G41010">
    <property type="gene designation" value="CAMBP25"/>
</dbReference>
<dbReference type="eggNOG" id="ENOG502SYS5">
    <property type="taxonomic scope" value="Eukaryota"/>
</dbReference>
<dbReference type="HOGENOM" id="CLU_080279_0_0_1"/>
<dbReference type="InParanoid" id="O80683"/>
<dbReference type="OMA" id="NHHHENL"/>
<dbReference type="OrthoDB" id="780868at2759"/>
<dbReference type="PhylomeDB" id="O80683"/>
<dbReference type="PRO" id="PR:O80683"/>
<dbReference type="Proteomes" id="UP000006548">
    <property type="component" value="Chromosome 2"/>
</dbReference>
<dbReference type="ExpressionAtlas" id="O80683">
    <property type="expression patterns" value="baseline and differential"/>
</dbReference>
<dbReference type="GO" id="GO:0005634">
    <property type="term" value="C:nucleus"/>
    <property type="evidence" value="ECO:0000314"/>
    <property type="project" value="TAIR"/>
</dbReference>
<dbReference type="GO" id="GO:0005516">
    <property type="term" value="F:calmodulin binding"/>
    <property type="evidence" value="ECO:0000314"/>
    <property type="project" value="TAIR"/>
</dbReference>
<dbReference type="GO" id="GO:0071456">
    <property type="term" value="P:cellular response to hypoxia"/>
    <property type="evidence" value="ECO:0007007"/>
    <property type="project" value="TAIR"/>
</dbReference>
<dbReference type="GO" id="GO:0010337">
    <property type="term" value="P:regulation of salicylic acid metabolic process"/>
    <property type="evidence" value="ECO:0000315"/>
    <property type="project" value="TAIR"/>
</dbReference>
<dbReference type="GO" id="GO:0009651">
    <property type="term" value="P:response to salt stress"/>
    <property type="evidence" value="ECO:0000315"/>
    <property type="project" value="TAIR"/>
</dbReference>
<dbReference type="GO" id="GO:0009414">
    <property type="term" value="P:response to water deprivation"/>
    <property type="evidence" value="ECO:0000270"/>
    <property type="project" value="TAIR"/>
</dbReference>
<dbReference type="InterPro" id="IPR008889">
    <property type="entry name" value="VQ"/>
</dbReference>
<dbReference type="InterPro" id="IPR039609">
    <property type="entry name" value="VQ_15/22"/>
</dbReference>
<dbReference type="PANTHER" id="PTHR33179:SF79">
    <property type="entry name" value="CALMODULIN-BINDING PROTEIN 25"/>
    <property type="match status" value="1"/>
</dbReference>
<dbReference type="PANTHER" id="PTHR33179">
    <property type="entry name" value="VQ MOTIF-CONTAINING PROTEIN"/>
    <property type="match status" value="1"/>
</dbReference>
<dbReference type="Pfam" id="PF05678">
    <property type="entry name" value="VQ"/>
    <property type="match status" value="1"/>
</dbReference>
<feature type="chain" id="PRO_0000432306" description="Calmodulin-binding protein 25">
    <location>
        <begin position="1"/>
        <end position="238"/>
    </location>
</feature>
<feature type="region of interest" description="Disordered" evidence="1">
    <location>
        <begin position="68"/>
        <end position="87"/>
    </location>
</feature>
<feature type="region of interest" description="Disordered" evidence="1">
    <location>
        <begin position="201"/>
        <end position="220"/>
    </location>
</feature>
<feature type="short sequence motif" description="Bipartite nuclear localization signal" evidence="7">
    <location>
        <begin position="92"/>
        <end position="108"/>
    </location>
</feature>
<feature type="short sequence motif" description="VQ" evidence="6">
    <location>
        <begin position="125"/>
        <end position="134"/>
    </location>
</feature>
<feature type="compositionally biased region" description="Polar residues" evidence="1">
    <location>
        <begin position="68"/>
        <end position="78"/>
    </location>
</feature>